<name>PHMF_PHANO</name>
<evidence type="ECO:0000250" key="1">
    <source>
        <dbReference type="UniProtKB" id="L0E2Z4"/>
    </source>
</evidence>
<evidence type="ECO:0000250" key="2">
    <source>
        <dbReference type="UniProtKB" id="O93868"/>
    </source>
</evidence>
<evidence type="ECO:0000255" key="3">
    <source>
        <dbReference type="PROSITE-ProRule" id="PRU10001"/>
    </source>
</evidence>
<evidence type="ECO:0000269" key="4">
    <source>
    </source>
</evidence>
<evidence type="ECO:0000303" key="5">
    <source>
    </source>
</evidence>
<evidence type="ECO:0000305" key="6"/>
<evidence type="ECO:0000305" key="7">
    <source>
    </source>
</evidence>
<keyword id="KW-0521">NADP</keyword>
<keyword id="KW-0560">Oxidoreductase</keyword>
<keyword id="KW-0843">Virulence</keyword>
<reference key="1">
    <citation type="journal article" date="2007" name="Plant Cell">
        <title>Dothideomycete-plant interactions illuminated by genome sequencing and EST analysis of the wheat pathogen Stagonospora nodorum.</title>
        <authorList>
            <person name="Hane J.K."/>
            <person name="Lowe R.G.T."/>
            <person name="Solomon P.S."/>
            <person name="Tan K.-C."/>
            <person name="Schoch C.L."/>
            <person name="Spatafora J.W."/>
            <person name="Crous P.W."/>
            <person name="Kodira C.D."/>
            <person name="Birren B.W."/>
            <person name="Galagan J.E."/>
            <person name="Torriani S.F.F."/>
            <person name="McDonald B.A."/>
            <person name="Oliver R.P."/>
        </authorList>
    </citation>
    <scope>NUCLEOTIDE SEQUENCE [LARGE SCALE GENOMIC DNA]</scope>
    <source>
        <strain>SN15 / ATCC MYA-4574 / FGSC 10173</strain>
    </source>
</reference>
<reference key="2">
    <citation type="journal article" date="2020" name="ACS Chem. Biol.">
        <title>Genomics-driven discovery of phytotoxic cytochalasans involved in the virulence of the wheat pathogen Parastagonospora nodorum.</title>
        <authorList>
            <person name="Li H."/>
            <person name="Wei H."/>
            <person name="Hu J."/>
            <person name="Lacey E."/>
            <person name="Sobolev A.N."/>
            <person name="Stubbs K.A."/>
            <person name="Solomon P.S."/>
            <person name="Chooi Y.H."/>
        </authorList>
    </citation>
    <scope>FUNCTION</scope>
    <scope>PATHWAY</scope>
</reference>
<proteinExistence type="inferred from homology"/>
<accession>Q0V6Q2</accession>
<organism>
    <name type="scientific">Phaeosphaeria nodorum (strain SN15 / ATCC MYA-4574 / FGSC 10173)</name>
    <name type="common">Glume blotch fungus</name>
    <name type="synonym">Parastagonospora nodorum</name>
    <dbReference type="NCBI Taxonomy" id="321614"/>
    <lineage>
        <taxon>Eukaryota</taxon>
        <taxon>Fungi</taxon>
        <taxon>Dikarya</taxon>
        <taxon>Ascomycota</taxon>
        <taxon>Pezizomycotina</taxon>
        <taxon>Dothideomycetes</taxon>
        <taxon>Pleosporomycetidae</taxon>
        <taxon>Pleosporales</taxon>
        <taxon>Pleosporineae</taxon>
        <taxon>Phaeosphaeriaceae</taxon>
        <taxon>Parastagonospora</taxon>
    </lineage>
</organism>
<dbReference type="EC" id="1.1.1.-" evidence="7"/>
<dbReference type="EMBL" id="CH445325">
    <property type="protein sequence ID" value="EAT91807.1"/>
    <property type="molecule type" value="Genomic_DNA"/>
</dbReference>
<dbReference type="RefSeq" id="XP_001791002.1">
    <property type="nucleotide sequence ID" value="XM_001790950.1"/>
</dbReference>
<dbReference type="SMR" id="Q0V6Q2"/>
<dbReference type="STRING" id="321614.Q0V6Q2"/>
<dbReference type="EnsemblFungi" id="SNOT_00312">
    <property type="protein sequence ID" value="SNOT_00312"/>
    <property type="gene ID" value="SNOG_00312"/>
</dbReference>
<dbReference type="GeneID" id="5968079"/>
<dbReference type="KEGG" id="pno:SNOG_00312"/>
<dbReference type="VEuPathDB" id="FungiDB:JI435_003120"/>
<dbReference type="eggNOG" id="KOG1208">
    <property type="taxonomic scope" value="Eukaryota"/>
</dbReference>
<dbReference type="HOGENOM" id="CLU_010194_44_4_1"/>
<dbReference type="InParanoid" id="Q0V6Q2"/>
<dbReference type="OMA" id="FWHHDIL"/>
<dbReference type="OrthoDB" id="542013at2759"/>
<dbReference type="Proteomes" id="UP000001055">
    <property type="component" value="Unassembled WGS sequence"/>
</dbReference>
<dbReference type="GO" id="GO:0016491">
    <property type="term" value="F:oxidoreductase activity"/>
    <property type="evidence" value="ECO:0007669"/>
    <property type="project" value="UniProtKB-KW"/>
</dbReference>
<dbReference type="Gene3D" id="3.40.50.720">
    <property type="entry name" value="NAD(P)-binding Rossmann-like Domain"/>
    <property type="match status" value="1"/>
</dbReference>
<dbReference type="InterPro" id="IPR036291">
    <property type="entry name" value="NAD(P)-bd_dom_sf"/>
</dbReference>
<dbReference type="InterPro" id="IPR002347">
    <property type="entry name" value="SDR_fam"/>
</dbReference>
<dbReference type="PANTHER" id="PTHR43157">
    <property type="entry name" value="PHOSPHATIDYLINOSITOL-GLYCAN BIOSYNTHESIS CLASS F PROTEIN-RELATED"/>
    <property type="match status" value="1"/>
</dbReference>
<dbReference type="PANTHER" id="PTHR43157:SF22">
    <property type="entry name" value="SHORT-CHAIN DEHYDROGENASE_REDUCTASE PHMF"/>
    <property type="match status" value="1"/>
</dbReference>
<dbReference type="Pfam" id="PF00106">
    <property type="entry name" value="adh_short"/>
    <property type="match status" value="1"/>
</dbReference>
<dbReference type="PRINTS" id="PR00081">
    <property type="entry name" value="GDHRDH"/>
</dbReference>
<dbReference type="SUPFAM" id="SSF51735">
    <property type="entry name" value="NAD(P)-binding Rossmann-fold domains"/>
    <property type="match status" value="1"/>
</dbReference>
<comment type="function">
    <text evidence="4 7">Short-chain dehydrogenase/reductase; part of the gene cluster that mediates the biosynthesis of the mycotoxins phomacins, leucine-derived cytochalasans with potent actin polymerization-inhibitory activities and monocot-specific antigerminative activities (PubMed:31815421). The first step in the pathway is catalyzed by the hybrid PKS-NRPS phmA, assisted by the enoyl reductase phmE, that are responsible for fusion of the leucine precursor and the polyketide backbone to produce a 2-pyrrolidone intermediate (PubMed:31815421). The polyketide synthase module (PKS) of phmA is responsible for the synthesis of the polyketide backbone and the downstream nonribosomal peptide synthetase (NRPS) amidates the carboxyl end of the polyketide with the leucine precursor (PubMed:31815421). Because phmA lacks a designated enoylreductase (ER) domain, the required activity is provided the enoyl reductase phmE (PubMed:31815421). Reduction by the hydrolyase phmG, followed by dehydration and intra-molecular Diels-Alder cyclization by the Diels-Alderase phmD then yield the required isoindolone-fused macrocycle (Probable). A number of oxidative steps catalyzed by the tailoring cytochrome P450 monooxygenase phmB, the FAD-linked oxidoreductase phmC and the short-chain dehydrogenase/reductase phmF, are further required to afford the final products, phomacin D and phomacin E (PubMed:31815421).</text>
</comment>
<comment type="pathway">
    <text evidence="7">Mycotoxin biosynthesis.</text>
</comment>
<comment type="similarity">
    <text evidence="6">Belongs to the short-chain dehydrogenases/reductases (SDR) family.</text>
</comment>
<gene>
    <name evidence="5" type="primary">phmFA</name>
    <name type="ORF">SNOG_00312</name>
</gene>
<sequence>MAEAFTTVPAKSSPARFRYTKANPVKDPTTSFAGKTILITGPNAGLGFEAATKFARLGASKLIFGVRSLERGQEAKTKIEQLTKCKRDAIQLVQLDMGSYASIEKFAKSVTDEFPVIHAAVLNAGVAPPSYKLSQEGWEMSLQVNVISTAYLAILLLPKLRESGRAIGEPAYLEFVSSTGHGDVTTESVRDGKSILKKVNDPANFKFTAQYQITKLLEIWAMEHIAAKTSPKEVIVNSACPGLCKSSIGRDFGIVLRGLDAVFKGIFAQTAEAGSRILVSAVTAGTDSHGGFWALDAVSVPGELVTSDEGKALSKQFWAEVLDVLRKQNADVEAILNG</sequence>
<feature type="chain" id="PRO_0000449453" description="Short-chain dehydrogenase/reductase phmF">
    <location>
        <begin position="1"/>
        <end position="338"/>
    </location>
</feature>
<feature type="active site" description="Proton donor" evidence="2">
    <location>
        <position position="177"/>
    </location>
</feature>
<feature type="active site" description="Proton acceptor" evidence="3">
    <location>
        <position position="211"/>
    </location>
</feature>
<feature type="active site" description="Lowers pKa of active site Tyr" evidence="2">
    <location>
        <position position="215"/>
    </location>
</feature>
<feature type="binding site" evidence="1">
    <location>
        <position position="46"/>
    </location>
    <ligand>
        <name>NADP(+)</name>
        <dbReference type="ChEBI" id="CHEBI:58349"/>
    </ligand>
</feature>
<feature type="binding site" evidence="1">
    <location>
        <position position="71"/>
    </location>
    <ligand>
        <name>NADP(+)</name>
        <dbReference type="ChEBI" id="CHEBI:58349"/>
    </ligand>
</feature>
<feature type="binding site" evidence="1">
    <location>
        <position position="96"/>
    </location>
    <ligand>
        <name>NADP(+)</name>
        <dbReference type="ChEBI" id="CHEBI:58349"/>
    </ligand>
</feature>
<feature type="binding site" evidence="2">
    <location>
        <position position="123"/>
    </location>
    <ligand>
        <name>NADP(+)</name>
        <dbReference type="ChEBI" id="CHEBI:58349"/>
    </ligand>
</feature>
<feature type="binding site" evidence="2">
    <location>
        <position position="211"/>
    </location>
    <ligand>
        <name>NADP(+)</name>
        <dbReference type="ChEBI" id="CHEBI:58349"/>
    </ligand>
</feature>
<feature type="binding site" evidence="2">
    <location>
        <position position="215"/>
    </location>
    <ligand>
        <name>NADP(+)</name>
        <dbReference type="ChEBI" id="CHEBI:58349"/>
    </ligand>
</feature>
<protein>
    <recommendedName>
        <fullName evidence="5">Short-chain dehydrogenase/reductase phmF</fullName>
        <ecNumber evidence="7">1.1.1.-</ecNumber>
    </recommendedName>
    <alternativeName>
        <fullName evidence="5">Phomacin biosynthesis cluster protein F</fullName>
    </alternativeName>
</protein>